<gene>
    <name type="primary">med7</name>
    <name type="ORF">DDB_G0269568</name>
</gene>
<comment type="function">
    <text evidence="1">Component of the Mediator complex, a coactivator involved in the regulated transcription of nearly all RNA polymerase II-dependent genes. Mediator functions as a bridge to convey information from gene-specific regulatory proteins to the basal RNA polymerase II transcription machinery. Mediator is recruited to promoters by direct interactions with regulatory proteins and serves as a scaffold for the assembly of a functional preinitiation complex with RNA polymerase II and the general transcription factors (By similarity).</text>
</comment>
<comment type="subunit">
    <text evidence="1">Component of the Mediator complex.</text>
</comment>
<comment type="subcellular location">
    <subcellularLocation>
        <location evidence="1">Nucleus</location>
    </subcellularLocation>
</comment>
<comment type="similarity">
    <text evidence="3">Belongs to the Mediator complex subunit 7 family.</text>
</comment>
<evidence type="ECO:0000250" key="1"/>
<evidence type="ECO:0000256" key="2">
    <source>
        <dbReference type="SAM" id="MobiDB-lite"/>
    </source>
</evidence>
<evidence type="ECO:0000305" key="3"/>
<protein>
    <recommendedName>
        <fullName>Putative mediator of RNA polymerase II transcription subunit 7</fullName>
    </recommendedName>
    <alternativeName>
        <fullName>Putative mediator complex subunit 7</fullName>
    </alternativeName>
</protein>
<reference key="1">
    <citation type="journal article" date="2005" name="Nature">
        <title>The genome of the social amoeba Dictyostelium discoideum.</title>
        <authorList>
            <person name="Eichinger L."/>
            <person name="Pachebat J.A."/>
            <person name="Gloeckner G."/>
            <person name="Rajandream M.A."/>
            <person name="Sucgang R."/>
            <person name="Berriman M."/>
            <person name="Song J."/>
            <person name="Olsen R."/>
            <person name="Szafranski K."/>
            <person name="Xu Q."/>
            <person name="Tunggal B."/>
            <person name="Kummerfeld S."/>
            <person name="Madera M."/>
            <person name="Konfortov B.A."/>
            <person name="Rivero F."/>
            <person name="Bankier A.T."/>
            <person name="Lehmann R."/>
            <person name="Hamlin N."/>
            <person name="Davies R."/>
            <person name="Gaudet P."/>
            <person name="Fey P."/>
            <person name="Pilcher K."/>
            <person name="Chen G."/>
            <person name="Saunders D."/>
            <person name="Sodergren E.J."/>
            <person name="Davis P."/>
            <person name="Kerhornou A."/>
            <person name="Nie X."/>
            <person name="Hall N."/>
            <person name="Anjard C."/>
            <person name="Hemphill L."/>
            <person name="Bason N."/>
            <person name="Farbrother P."/>
            <person name="Desany B."/>
            <person name="Just E."/>
            <person name="Morio T."/>
            <person name="Rost R."/>
            <person name="Churcher C.M."/>
            <person name="Cooper J."/>
            <person name="Haydock S."/>
            <person name="van Driessche N."/>
            <person name="Cronin A."/>
            <person name="Goodhead I."/>
            <person name="Muzny D.M."/>
            <person name="Mourier T."/>
            <person name="Pain A."/>
            <person name="Lu M."/>
            <person name="Harper D."/>
            <person name="Lindsay R."/>
            <person name="Hauser H."/>
            <person name="James K.D."/>
            <person name="Quiles M."/>
            <person name="Madan Babu M."/>
            <person name="Saito T."/>
            <person name="Buchrieser C."/>
            <person name="Wardroper A."/>
            <person name="Felder M."/>
            <person name="Thangavelu M."/>
            <person name="Johnson D."/>
            <person name="Knights A."/>
            <person name="Loulseged H."/>
            <person name="Mungall K.L."/>
            <person name="Oliver K."/>
            <person name="Price C."/>
            <person name="Quail M.A."/>
            <person name="Urushihara H."/>
            <person name="Hernandez J."/>
            <person name="Rabbinowitsch E."/>
            <person name="Steffen D."/>
            <person name="Sanders M."/>
            <person name="Ma J."/>
            <person name="Kohara Y."/>
            <person name="Sharp S."/>
            <person name="Simmonds M.N."/>
            <person name="Spiegler S."/>
            <person name="Tivey A."/>
            <person name="Sugano S."/>
            <person name="White B."/>
            <person name="Walker D."/>
            <person name="Woodward J.R."/>
            <person name="Winckler T."/>
            <person name="Tanaka Y."/>
            <person name="Shaulsky G."/>
            <person name="Schleicher M."/>
            <person name="Weinstock G.M."/>
            <person name="Rosenthal A."/>
            <person name="Cox E.C."/>
            <person name="Chisholm R.L."/>
            <person name="Gibbs R.A."/>
            <person name="Loomis W.F."/>
            <person name="Platzer M."/>
            <person name="Kay R.R."/>
            <person name="Williams J.G."/>
            <person name="Dear P.H."/>
            <person name="Noegel A.A."/>
            <person name="Barrell B.G."/>
            <person name="Kuspa A."/>
        </authorList>
    </citation>
    <scope>NUCLEOTIDE SEQUENCE [LARGE SCALE GENOMIC DNA]</scope>
    <source>
        <strain>AX4</strain>
    </source>
</reference>
<reference key="2">
    <citation type="journal article" date="2008" name="Nucleic Acids Res.">
        <title>Comparative genomics supports a deep evolutionary origin for the large, four-module transcriptional mediator complex.</title>
        <authorList>
            <person name="Bourbon H.-M."/>
        </authorList>
    </citation>
    <scope>NOMENCLATURE</scope>
</reference>
<name>MED7_DICDI</name>
<organism>
    <name type="scientific">Dictyostelium discoideum</name>
    <name type="common">Social amoeba</name>
    <dbReference type="NCBI Taxonomy" id="44689"/>
    <lineage>
        <taxon>Eukaryota</taxon>
        <taxon>Amoebozoa</taxon>
        <taxon>Evosea</taxon>
        <taxon>Eumycetozoa</taxon>
        <taxon>Dictyostelia</taxon>
        <taxon>Dictyosteliales</taxon>
        <taxon>Dictyosteliaceae</taxon>
        <taxon>Dictyostelium</taxon>
    </lineage>
</organism>
<proteinExistence type="inferred from homology"/>
<feature type="chain" id="PRO_0000388647" description="Putative mediator of RNA polymerase II transcription subunit 7">
    <location>
        <begin position="1"/>
        <end position="345"/>
    </location>
</feature>
<feature type="region of interest" description="Disordered" evidence="2">
    <location>
        <begin position="1"/>
        <end position="130"/>
    </location>
</feature>
<feature type="region of interest" description="Disordered" evidence="2">
    <location>
        <begin position="292"/>
        <end position="315"/>
    </location>
</feature>
<feature type="compositionally biased region" description="Low complexity" evidence="2">
    <location>
        <begin position="1"/>
        <end position="27"/>
    </location>
</feature>
<feature type="compositionally biased region" description="Low complexity" evidence="2">
    <location>
        <begin position="88"/>
        <end position="126"/>
    </location>
</feature>
<sequence>MNTSQQQQQQQQQQQQQQQQQQQTPQQVENVSAFPPPPPFYKLYLNYKKDVDYSKPTTENSKKNDTPEGNESTIEKNIDNSDEMNIDNNNNNNNNNNNNNNNNNNNNNNNNNNNNNNNNNNNNNNNKATTSTNKKIELNKPLAPPLPPKVGANYVQFGQTYSTVDMLPSLDESGAKQLYPKGDIEPISELKKLNRSILFNYLQLLETLIENPKNYQSKIEDISLLFINFHHLLNSYRPHQARETLLSIMNEQIKQKNQSNESIKKALDICKESLMNSFKNLNIEDKQIDSATPLPTNITSPTKNLMSPTKLNNSQDVNMNENNDDDEDKEINWMDQLLDEMLKIN</sequence>
<accession>Q55DQ5</accession>
<dbReference type="EMBL" id="AAFI02000005">
    <property type="protein sequence ID" value="EAL72134.1"/>
    <property type="molecule type" value="Genomic_DNA"/>
</dbReference>
<dbReference type="RefSeq" id="XP_646076.1">
    <property type="nucleotide sequence ID" value="XM_640984.1"/>
</dbReference>
<dbReference type="SMR" id="Q55DQ5"/>
<dbReference type="FunCoup" id="Q55DQ5">
    <property type="interactions" value="20"/>
</dbReference>
<dbReference type="STRING" id="44689.Q55DQ5"/>
<dbReference type="PaxDb" id="44689-DDB0266857"/>
<dbReference type="EnsemblProtists" id="EAL72134">
    <property type="protein sequence ID" value="EAL72134"/>
    <property type="gene ID" value="DDB_G0269568"/>
</dbReference>
<dbReference type="GeneID" id="8617026"/>
<dbReference type="KEGG" id="ddi:DDB_G0269568"/>
<dbReference type="dictyBase" id="DDB_G0269568">
    <property type="gene designation" value="med7"/>
</dbReference>
<dbReference type="VEuPathDB" id="AmoebaDB:DDB_G0269568"/>
<dbReference type="eggNOG" id="KOG0570">
    <property type="taxonomic scope" value="Eukaryota"/>
</dbReference>
<dbReference type="HOGENOM" id="CLU_805171_0_0_1"/>
<dbReference type="InParanoid" id="Q55DQ5"/>
<dbReference type="OMA" id="SYRPHQA"/>
<dbReference type="PRO" id="PR:Q55DQ5"/>
<dbReference type="Proteomes" id="UP000002195">
    <property type="component" value="Chromosome 1"/>
</dbReference>
<dbReference type="GO" id="GO:0070847">
    <property type="term" value="C:core mediator complex"/>
    <property type="evidence" value="ECO:0000250"/>
    <property type="project" value="dictyBase"/>
</dbReference>
<dbReference type="GO" id="GO:0016592">
    <property type="term" value="C:mediator complex"/>
    <property type="evidence" value="ECO:0000318"/>
    <property type="project" value="GO_Central"/>
</dbReference>
<dbReference type="GO" id="GO:0003712">
    <property type="term" value="F:transcription coregulator activity"/>
    <property type="evidence" value="ECO:0007669"/>
    <property type="project" value="InterPro"/>
</dbReference>
<dbReference type="GO" id="GO:0000122">
    <property type="term" value="P:negative regulation of transcription by RNA polymerase II"/>
    <property type="evidence" value="ECO:0000250"/>
    <property type="project" value="dictyBase"/>
</dbReference>
<dbReference type="GO" id="GO:0006357">
    <property type="term" value="P:regulation of transcription by RNA polymerase II"/>
    <property type="evidence" value="ECO:0000318"/>
    <property type="project" value="GO_Central"/>
</dbReference>
<dbReference type="Gene3D" id="6.10.140.200">
    <property type="match status" value="1"/>
</dbReference>
<dbReference type="InterPro" id="IPR037212">
    <property type="entry name" value="Med7/Med21-like"/>
</dbReference>
<dbReference type="InterPro" id="IPR009244">
    <property type="entry name" value="Mediatior_Med7"/>
</dbReference>
<dbReference type="InterPro" id="IPR044888">
    <property type="entry name" value="Mediatior_Med7_sf"/>
</dbReference>
<dbReference type="PANTHER" id="PTHR21428">
    <property type="entry name" value="MEDIATOR OF RNA POLYMERASE II TRANSCRIPTION SUBUNIT 7"/>
    <property type="match status" value="1"/>
</dbReference>
<dbReference type="PANTHER" id="PTHR21428:SF11">
    <property type="entry name" value="MEDIATOR OF RNA POLYMERASE II TRANSCRIPTION SUBUNIT 7"/>
    <property type="match status" value="1"/>
</dbReference>
<dbReference type="Pfam" id="PF05983">
    <property type="entry name" value="Med7"/>
    <property type="match status" value="1"/>
</dbReference>
<dbReference type="SUPFAM" id="SSF140718">
    <property type="entry name" value="Mediator hinge subcomplex-like"/>
    <property type="match status" value="1"/>
</dbReference>
<keyword id="KW-0010">Activator</keyword>
<keyword id="KW-0539">Nucleus</keyword>
<keyword id="KW-1185">Reference proteome</keyword>
<keyword id="KW-0804">Transcription</keyword>
<keyword id="KW-0805">Transcription regulation</keyword>